<proteinExistence type="evidence at protein level"/>
<sequence>MQSTLNLSTEEPVKRNTVKKYKIICIVLLILLVAVSLALGLVAGLRQQEEQGSCRKKCFDASHRGLEGCRCDVGCKGRGDCCWDFEDTCVQSTQIWTCNKFRCGETRLESSLCSCSDDCLQRKDCCADYKSVCQGETSWVDEDCSTAQQPQCPEGFDLPPVILFSMDGFRAEYLQTWSTLVPNINKLKTCGVHSQYLRPAYPTKTFPNHYTIVTGLYPESHGIIDNNMYDINLNKNFSLSSKEKDNPAWWQGQPIWLTAMYQGLKVGTYFWPGSDVAINGTFPSIYKIYNRSVTYEERIFTLLKWLDLPKAERPDFYTIYVEEPDSQGHNYGPVSAGVIQALQLVDKTFGLLMEGLKQRNLVNCVNIILLADHGMDQTYCDKLEYMADYFSSINFYMFEGPAPRIRTRNIPQDFFTFNSEEIVRNLSCRKPDQHFKPYLSPDLPKRLHFAKNVRIDKVNLLVDRQWQAVRNRAYSYCGGGNHGYDNEFKSMEAIFLAHGPSFKQKTEVEPFDNIEVYNLLCDLLHIQPAPNNGTHGSLNHLLKVPFYEPSHAEELSKFSVCGFTVPLPTDTLGCSCSRLQTNSDLERVNQMLDLTQDEITATEKLNLPFGRPRLIQKNKEPCLLYHREYVSGFDKTLRMPLWSSYTVPKPGDTSPLPPTVPDCLRADVRVAPSESQNCSFSLADKNITHGFLYPPANNRTSNSQYDALITSNLVPMYEAFKTMWNYFHSVLLVKYAMERNGVNVVSGPVFDYDYDGHFDAPDEIADYAVNTSVPIPTHYFVVLTSCKNQSQTPDACTGWLDVLPFVIPHRPTNVESCPENKSESLWVEERFNVHTARVRDVELLTGLDFYQEKAQPVSEILQLKTYLPVFETVI</sequence>
<name>ENPP3_BOVIN</name>
<organism>
    <name type="scientific">Bos taurus</name>
    <name type="common">Bovine</name>
    <dbReference type="NCBI Taxonomy" id="9913"/>
    <lineage>
        <taxon>Eukaryota</taxon>
        <taxon>Metazoa</taxon>
        <taxon>Chordata</taxon>
        <taxon>Craniata</taxon>
        <taxon>Vertebrata</taxon>
        <taxon>Euteleostomi</taxon>
        <taxon>Mammalia</taxon>
        <taxon>Eutheria</taxon>
        <taxon>Laurasiatheria</taxon>
        <taxon>Artiodactyla</taxon>
        <taxon>Ruminantia</taxon>
        <taxon>Pecora</taxon>
        <taxon>Bovidae</taxon>
        <taxon>Bovinae</taxon>
        <taxon>Bos</taxon>
    </lineage>
</organism>
<feature type="chain" id="PRO_0000058534" description="Ectonucleotide pyrophosphatase/phosphodiesterase family member 3">
    <location>
        <begin position="1"/>
        <end position="874"/>
    </location>
</feature>
<feature type="topological domain" description="Cytoplasmic" evidence="4">
    <location>
        <begin position="1"/>
        <end position="11"/>
    </location>
</feature>
<feature type="transmembrane region" description="Helical; Signal-anchor for type II membrane protein" evidence="4">
    <location>
        <begin position="12"/>
        <end position="30"/>
    </location>
</feature>
<feature type="topological domain" description="Extracellular" evidence="4">
    <location>
        <begin position="31"/>
        <end position="874"/>
    </location>
</feature>
<feature type="domain" description="SMB 1" evidence="5">
    <location>
        <begin position="50"/>
        <end position="93"/>
    </location>
</feature>
<feature type="domain" description="SMB 2" evidence="5">
    <location>
        <begin position="94"/>
        <end position="138"/>
    </location>
</feature>
<feature type="region of interest" description="Phosphodiesterase" evidence="1">
    <location>
        <begin position="160"/>
        <end position="544"/>
    </location>
</feature>
<feature type="region of interest" description="Nuclease" evidence="1">
    <location>
        <begin position="581"/>
        <end position="874"/>
    </location>
</feature>
<feature type="short sequence motif" description="Cell attachment site" evidence="4">
    <location>
        <begin position="78"/>
        <end position="80"/>
    </location>
</feature>
<feature type="active site" description="Nucleophile" evidence="6">
    <location>
        <position position="205"/>
    </location>
</feature>
<feature type="binding site" evidence="1">
    <location>
        <position position="167"/>
    </location>
    <ligand>
        <name>Zn(2+)</name>
        <dbReference type="ChEBI" id="CHEBI:29105"/>
        <label>1</label>
        <note>catalytic</note>
    </ligand>
</feature>
<feature type="binding site" evidence="1">
    <location>
        <position position="204"/>
    </location>
    <ligand>
        <name>ATP</name>
        <dbReference type="ChEBI" id="CHEBI:30616"/>
    </ligand>
</feature>
<feature type="binding site" evidence="1">
    <location>
        <position position="205"/>
    </location>
    <ligand>
        <name>Zn(2+)</name>
        <dbReference type="ChEBI" id="CHEBI:29105"/>
        <label>1</label>
        <note>catalytic</note>
    </ligand>
</feature>
<feature type="binding site" evidence="1">
    <location>
        <position position="226"/>
    </location>
    <ligand>
        <name>ATP</name>
        <dbReference type="ChEBI" id="CHEBI:30616"/>
    </ligand>
</feature>
<feature type="binding site" evidence="1">
    <location>
        <position position="275"/>
    </location>
    <ligand>
        <name>ATP</name>
        <dbReference type="ChEBI" id="CHEBI:30616"/>
    </ligand>
</feature>
<feature type="binding site" evidence="1">
    <location>
        <position position="289"/>
    </location>
    <ligand>
        <name>ATP</name>
        <dbReference type="ChEBI" id="CHEBI:30616"/>
    </ligand>
</feature>
<feature type="binding site" evidence="1">
    <location>
        <position position="325"/>
    </location>
    <ligand>
        <name>Zn(2+)</name>
        <dbReference type="ChEBI" id="CHEBI:29105"/>
        <label>2</label>
        <note>catalytic</note>
    </ligand>
</feature>
<feature type="binding site" evidence="1">
    <location>
        <position position="329"/>
    </location>
    <ligand>
        <name>Zn(2+)</name>
        <dbReference type="ChEBI" id="CHEBI:29105"/>
        <label>2</label>
        <note>catalytic</note>
    </ligand>
</feature>
<feature type="binding site" evidence="1">
    <location>
        <position position="372"/>
    </location>
    <ligand>
        <name>Zn(2+)</name>
        <dbReference type="ChEBI" id="CHEBI:29105"/>
        <label>1</label>
        <note>catalytic</note>
    </ligand>
</feature>
<feature type="binding site" evidence="1">
    <location>
        <position position="373"/>
    </location>
    <ligand>
        <name>Zn(2+)</name>
        <dbReference type="ChEBI" id="CHEBI:29105"/>
        <label>1</label>
        <note>catalytic</note>
    </ligand>
</feature>
<feature type="binding site" evidence="1">
    <location>
        <position position="482"/>
    </location>
    <ligand>
        <name>Zn(2+)</name>
        <dbReference type="ChEBI" id="CHEBI:29105"/>
        <label>2</label>
        <note>catalytic</note>
    </ligand>
</feature>
<feature type="binding site" evidence="1">
    <location>
        <position position="751"/>
    </location>
    <ligand>
        <name>Ca(2+)</name>
        <dbReference type="ChEBI" id="CHEBI:29108"/>
    </ligand>
</feature>
<feature type="binding site" evidence="1">
    <location>
        <position position="755"/>
    </location>
    <ligand>
        <name>Ca(2+)</name>
        <dbReference type="ChEBI" id="CHEBI:29108"/>
    </ligand>
</feature>
<feature type="binding site" evidence="1">
    <location>
        <position position="757"/>
    </location>
    <ligand>
        <name>Ca(2+)</name>
        <dbReference type="ChEBI" id="CHEBI:29108"/>
    </ligand>
</feature>
<feature type="binding site" evidence="1">
    <location>
        <position position="759"/>
    </location>
    <ligand>
        <name>Ca(2+)</name>
        <dbReference type="ChEBI" id="CHEBI:29108"/>
    </ligand>
</feature>
<feature type="glycosylation site" description="N-linked (GlcNAc...) asparagine" evidence="4">
    <location>
        <position position="236"/>
    </location>
</feature>
<feature type="glycosylation site" description="N-linked (GlcNAc...) asparagine" evidence="4">
    <location>
        <position position="279"/>
    </location>
</feature>
<feature type="glycosylation site" description="N-linked (GlcNAc...) asparagine" evidence="4">
    <location>
        <position position="290"/>
    </location>
</feature>
<feature type="glycosylation site" description="N-linked (GlcNAc...) asparagine" evidence="4">
    <location>
        <position position="425"/>
    </location>
</feature>
<feature type="glycosylation site" description="N-linked (GlcNAc...) asparagine" evidence="4">
    <location>
        <position position="532"/>
    </location>
</feature>
<feature type="glycosylation site" description="N-linked (GlcNAc...) asparagine" evidence="4">
    <location>
        <position position="677"/>
    </location>
</feature>
<feature type="glycosylation site" description="N-linked (GlcNAc...) asparagine" evidence="4">
    <location>
        <position position="686"/>
    </location>
</feature>
<feature type="glycosylation site" description="N-linked (GlcNAc...) asparagine" evidence="4">
    <location>
        <position position="698"/>
    </location>
</feature>
<feature type="glycosylation site" description="N-linked (GlcNAc...) asparagine" evidence="4">
    <location>
        <position position="770"/>
    </location>
</feature>
<feature type="glycosylation site" description="N-linked (GlcNAc...) asparagine" evidence="4">
    <location>
        <position position="788"/>
    </location>
</feature>
<feature type="glycosylation site" description="N-linked (GlcNAc...) asparagine" evidence="4">
    <location>
        <position position="820"/>
    </location>
</feature>
<feature type="disulfide bond" evidence="5">
    <location>
        <begin position="54"/>
        <end position="71"/>
    </location>
</feature>
<feature type="disulfide bond" evidence="5">
    <location>
        <begin position="58"/>
        <end position="89"/>
    </location>
</feature>
<feature type="disulfide bond" evidence="5">
    <location>
        <begin position="69"/>
        <end position="82"/>
    </location>
</feature>
<feature type="disulfide bond" evidence="5">
    <location>
        <begin position="75"/>
        <end position="81"/>
    </location>
</feature>
<feature type="disulfide bond" evidence="5">
    <location>
        <begin position="98"/>
        <end position="115"/>
    </location>
</feature>
<feature type="disulfide bond" evidence="5">
    <location>
        <begin position="103"/>
        <end position="133"/>
    </location>
</feature>
<feature type="disulfide bond" evidence="5">
    <location>
        <begin position="113"/>
        <end position="126"/>
    </location>
</feature>
<feature type="disulfide bond" evidence="5">
    <location>
        <begin position="119"/>
        <end position="125"/>
    </location>
</feature>
<feature type="disulfide bond" evidence="5">
    <location>
        <begin position="144"/>
        <end position="190"/>
    </location>
</feature>
<feature type="disulfide bond" evidence="5">
    <location>
        <begin position="152"/>
        <end position="364"/>
    </location>
</feature>
<feature type="disulfide bond" evidence="5">
    <location>
        <begin position="380"/>
        <end position="477"/>
    </location>
</feature>
<feature type="disulfide bond" evidence="5">
    <location>
        <begin position="428"/>
        <end position="817"/>
    </location>
</feature>
<feature type="disulfide bond" evidence="1">
    <location>
        <begin position="561"/>
        <end position="622"/>
    </location>
</feature>
<feature type="disulfide bond" evidence="5">
    <location>
        <begin position="574"/>
        <end position="678"/>
    </location>
</feature>
<feature type="disulfide bond" evidence="5">
    <location>
        <begin position="576"/>
        <end position="663"/>
    </location>
</feature>
<feature type="disulfide bond" evidence="5">
    <location>
        <begin position="786"/>
        <end position="796"/>
    </location>
</feature>
<keyword id="KW-0067">ATP-binding</keyword>
<keyword id="KW-0106">Calcium</keyword>
<keyword id="KW-1003">Cell membrane</keyword>
<keyword id="KW-0903">Direct protein sequencing</keyword>
<keyword id="KW-1015">Disulfide bond</keyword>
<keyword id="KW-0325">Glycoprotein</keyword>
<keyword id="KW-0378">Hydrolase</keyword>
<keyword id="KW-0472">Membrane</keyword>
<keyword id="KW-0479">Metal-binding</keyword>
<keyword id="KW-0547">Nucleotide-binding</keyword>
<keyword id="KW-1185">Reference proteome</keyword>
<keyword id="KW-0677">Repeat</keyword>
<keyword id="KW-0964">Secreted</keyword>
<keyword id="KW-0735">Signal-anchor</keyword>
<keyword id="KW-0812">Transmembrane</keyword>
<keyword id="KW-1133">Transmembrane helix</keyword>
<keyword id="KW-0862">Zinc</keyword>
<reference key="1">
    <citation type="submission" date="2006-08" db="EMBL/GenBank/DDBJ databases">
        <authorList>
            <consortium name="NIH - Mammalian Gene Collection (MGC) project"/>
        </authorList>
    </citation>
    <scope>NUCLEOTIDE SEQUENCE [LARGE SCALE MRNA]</scope>
    <source>
        <strain>Crossbred X Angus</strain>
        <tissue>Ileum</tissue>
    </source>
</reference>
<reference key="2">
    <citation type="journal article" date="1985" name="J. Biol. Chem.">
        <title>Amino acid sequence of the active site peptide of bovine intestinal 5'-nucleotide phosphodiesterase and identification of the active site residue as threonine.</title>
        <authorList>
            <person name="Culp J.S."/>
            <person name="Blytt H.J."/>
            <person name="Hermodson M."/>
            <person name="Butler L.G."/>
        </authorList>
    </citation>
    <scope>PROTEIN SEQUENCE OF 167-226</scope>
    <scope>ACTIVE SITE</scope>
    <source>
        <tissue>Intestine</tissue>
    </source>
</reference>
<dbReference type="EC" id="3.1.4.1" evidence="1"/>
<dbReference type="EC" id="3.6.1.-" evidence="1"/>
<dbReference type="EC" id="3.6.1.9" evidence="1"/>
<dbReference type="EMBL" id="BC122742">
    <property type="protein sequence ID" value="AAI22743.1"/>
    <property type="molecule type" value="mRNA"/>
</dbReference>
<dbReference type="PIR" id="A25274">
    <property type="entry name" value="A25274"/>
</dbReference>
<dbReference type="RefSeq" id="NP_001069391.1">
    <property type="nucleotide sequence ID" value="NM_001075923.2"/>
</dbReference>
<dbReference type="SMR" id="P15396"/>
<dbReference type="FunCoup" id="P15396">
    <property type="interactions" value="181"/>
</dbReference>
<dbReference type="STRING" id="9913.ENSBTAP00000026900"/>
<dbReference type="BindingDB" id="P15396"/>
<dbReference type="ChEMBL" id="CHEMBL3593152"/>
<dbReference type="GlyCosmos" id="P15396">
    <property type="glycosylation" value="11 sites, No reported glycans"/>
</dbReference>
<dbReference type="GlyGen" id="P15396">
    <property type="glycosylation" value="11 sites"/>
</dbReference>
<dbReference type="PaxDb" id="9913-ENSBTAP00000026900"/>
<dbReference type="Ensembl" id="ENSBTAT00000026900.6">
    <property type="protein sequence ID" value="ENSBTAP00000026900.6"/>
    <property type="gene ID" value="ENSBTAG00000020196.7"/>
</dbReference>
<dbReference type="GeneID" id="529405"/>
<dbReference type="KEGG" id="bta:529405"/>
<dbReference type="CTD" id="5169"/>
<dbReference type="VEuPathDB" id="HostDB:ENSBTAG00000020196"/>
<dbReference type="VGNC" id="VGNC:28506">
    <property type="gene designation" value="ENPP3"/>
</dbReference>
<dbReference type="eggNOG" id="KOG2645">
    <property type="taxonomic scope" value="Eukaryota"/>
</dbReference>
<dbReference type="GeneTree" id="ENSGT00940000159640"/>
<dbReference type="InParanoid" id="P15396"/>
<dbReference type="OMA" id="LFRCGER"/>
<dbReference type="OrthoDB" id="415411at2759"/>
<dbReference type="SABIO-RK" id="P15396"/>
<dbReference type="Proteomes" id="UP000009136">
    <property type="component" value="Chromosome 9"/>
</dbReference>
<dbReference type="Bgee" id="ENSBTAG00000020196">
    <property type="expression patterns" value="Expressed in caput epididymis and 61 other cell types or tissues"/>
</dbReference>
<dbReference type="GO" id="GO:0016324">
    <property type="term" value="C:apical plasma membrane"/>
    <property type="evidence" value="ECO:0007669"/>
    <property type="project" value="UniProtKB-SubCell"/>
</dbReference>
<dbReference type="GO" id="GO:0009897">
    <property type="term" value="C:external side of plasma membrane"/>
    <property type="evidence" value="ECO:0000250"/>
    <property type="project" value="UniProtKB"/>
</dbReference>
<dbReference type="GO" id="GO:0005576">
    <property type="term" value="C:extracellular region"/>
    <property type="evidence" value="ECO:0007669"/>
    <property type="project" value="UniProtKB-SubCell"/>
</dbReference>
<dbReference type="GO" id="GO:0005886">
    <property type="term" value="C:plasma membrane"/>
    <property type="evidence" value="ECO:0000250"/>
    <property type="project" value="UniProtKB"/>
</dbReference>
<dbReference type="GO" id="GO:0005524">
    <property type="term" value="F:ATP binding"/>
    <property type="evidence" value="ECO:0007669"/>
    <property type="project" value="UniProtKB-KW"/>
</dbReference>
<dbReference type="GO" id="GO:0047693">
    <property type="term" value="F:ATP diphosphatase activity"/>
    <property type="evidence" value="ECO:0007669"/>
    <property type="project" value="RHEA"/>
</dbReference>
<dbReference type="GO" id="GO:0034432">
    <property type="term" value="F:bis(5'-adenosyl)-pentaphosphatase activity"/>
    <property type="evidence" value="ECO:0000250"/>
    <property type="project" value="UniProtKB"/>
</dbReference>
<dbReference type="GO" id="GO:0047710">
    <property type="term" value="F:bis(5'-adenosyl)-triphosphatase activity"/>
    <property type="evidence" value="ECO:0000250"/>
    <property type="project" value="UniProtKB"/>
</dbReference>
<dbReference type="GO" id="GO:0004081">
    <property type="term" value="F:bis(5'-nucleosyl)-tetraphosphatase (asymmetrical) activity"/>
    <property type="evidence" value="ECO:0000250"/>
    <property type="project" value="UniProtKB"/>
</dbReference>
<dbReference type="GO" id="GO:0005509">
    <property type="term" value="F:calcium ion binding"/>
    <property type="evidence" value="ECO:0000250"/>
    <property type="project" value="UniProtKB"/>
</dbReference>
<dbReference type="GO" id="GO:0036219">
    <property type="term" value="F:GTP diphosphatase activity"/>
    <property type="evidence" value="ECO:0007669"/>
    <property type="project" value="RHEA"/>
</dbReference>
<dbReference type="GO" id="GO:0003676">
    <property type="term" value="F:nucleic acid binding"/>
    <property type="evidence" value="ECO:0007669"/>
    <property type="project" value="InterPro"/>
</dbReference>
<dbReference type="GO" id="GO:0047429">
    <property type="term" value="F:nucleoside triphosphate diphosphatase activity"/>
    <property type="evidence" value="ECO:0000250"/>
    <property type="project" value="UniProtKB"/>
</dbReference>
<dbReference type="GO" id="GO:0004528">
    <property type="term" value="F:phosphodiesterase I activity"/>
    <property type="evidence" value="ECO:0000250"/>
    <property type="project" value="UniProtKB"/>
</dbReference>
<dbReference type="GO" id="GO:0036221">
    <property type="term" value="F:UTP diphosphatase activity"/>
    <property type="evidence" value="ECO:0007669"/>
    <property type="project" value="RHEA"/>
</dbReference>
<dbReference type="GO" id="GO:0008270">
    <property type="term" value="F:zinc ion binding"/>
    <property type="evidence" value="ECO:0000250"/>
    <property type="project" value="UniProtKB"/>
</dbReference>
<dbReference type="GO" id="GO:0046034">
    <property type="term" value="P:ATP metabolic process"/>
    <property type="evidence" value="ECO:0000250"/>
    <property type="project" value="UniProtKB"/>
</dbReference>
<dbReference type="GO" id="GO:0002276">
    <property type="term" value="P:basophil activation involved in immune response"/>
    <property type="evidence" value="ECO:0000250"/>
    <property type="project" value="UniProtKB"/>
</dbReference>
<dbReference type="GO" id="GO:0050728">
    <property type="term" value="P:negative regulation of inflammatory response"/>
    <property type="evidence" value="ECO:0000250"/>
    <property type="project" value="UniProtKB"/>
</dbReference>
<dbReference type="GO" id="GO:0033007">
    <property type="term" value="P:negative regulation of mast cell activation involved in immune response"/>
    <property type="evidence" value="ECO:0000250"/>
    <property type="project" value="UniProtKB"/>
</dbReference>
<dbReference type="GO" id="GO:0070667">
    <property type="term" value="P:negative regulation of mast cell proliferation"/>
    <property type="evidence" value="ECO:0000250"/>
    <property type="project" value="UniProtKB"/>
</dbReference>
<dbReference type="GO" id="GO:0009143">
    <property type="term" value="P:nucleoside triphosphate catabolic process"/>
    <property type="evidence" value="ECO:0000318"/>
    <property type="project" value="GO_Central"/>
</dbReference>
<dbReference type="GO" id="GO:0055062">
    <property type="term" value="P:phosphate ion homeostasis"/>
    <property type="evidence" value="ECO:0007669"/>
    <property type="project" value="Ensembl"/>
</dbReference>
<dbReference type="GO" id="GO:0006220">
    <property type="term" value="P:pyrimidine nucleotide metabolic process"/>
    <property type="evidence" value="ECO:0000250"/>
    <property type="project" value="UniProtKB"/>
</dbReference>
<dbReference type="CDD" id="cd16018">
    <property type="entry name" value="Enpp"/>
    <property type="match status" value="1"/>
</dbReference>
<dbReference type="CDD" id="cd00091">
    <property type="entry name" value="NUC"/>
    <property type="match status" value="1"/>
</dbReference>
<dbReference type="FunFam" id="3.40.720.10:FF:000010">
    <property type="entry name" value="Ectonucleotide pyrophosphatase/phosphodiesterase family member 1"/>
    <property type="match status" value="1"/>
</dbReference>
<dbReference type="FunFam" id="4.10.410.20:FF:000001">
    <property type="entry name" value="Ectonucleotide pyrophosphatase/phosphodiesterase family member 2"/>
    <property type="match status" value="1"/>
</dbReference>
<dbReference type="FunFam" id="3.40.570.10:FF:000005">
    <property type="entry name" value="ectonucleotide pyrophosphatase/phosphodiesterase family member 3"/>
    <property type="match status" value="1"/>
</dbReference>
<dbReference type="FunFam" id="4.10.410.20:FF:000004">
    <property type="entry name" value="ectonucleotide pyrophosphatase/phosphodiesterase family member 3"/>
    <property type="match status" value="1"/>
</dbReference>
<dbReference type="Gene3D" id="4.10.410.20">
    <property type="match status" value="2"/>
</dbReference>
<dbReference type="Gene3D" id="3.40.720.10">
    <property type="entry name" value="Alkaline Phosphatase, subunit A"/>
    <property type="match status" value="1"/>
</dbReference>
<dbReference type="Gene3D" id="3.40.570.10">
    <property type="entry name" value="Extracellular Endonuclease, subunit A"/>
    <property type="match status" value="1"/>
</dbReference>
<dbReference type="InterPro" id="IPR017850">
    <property type="entry name" value="Alkaline_phosphatase_core_sf"/>
</dbReference>
<dbReference type="InterPro" id="IPR044929">
    <property type="entry name" value="DNA/RNA_non-sp_Endonuclease_sf"/>
</dbReference>
<dbReference type="InterPro" id="IPR001604">
    <property type="entry name" value="Endo_G_ENPP1-like_dom"/>
</dbReference>
<dbReference type="InterPro" id="IPR020821">
    <property type="entry name" value="ENPP1-3/EXOG-like_nuc-like"/>
</dbReference>
<dbReference type="InterPro" id="IPR044925">
    <property type="entry name" value="His-Me_finger_sf"/>
</dbReference>
<dbReference type="InterPro" id="IPR002591">
    <property type="entry name" value="Phosphodiest/P_Trfase"/>
</dbReference>
<dbReference type="InterPro" id="IPR036024">
    <property type="entry name" value="Somatomedin_B-like_dom_sf"/>
</dbReference>
<dbReference type="InterPro" id="IPR001212">
    <property type="entry name" value="Somatomedin_B_dom"/>
</dbReference>
<dbReference type="PANTHER" id="PTHR10151">
    <property type="entry name" value="ECTONUCLEOTIDE PYROPHOSPHATASE/PHOSPHODIESTERASE"/>
    <property type="match status" value="1"/>
</dbReference>
<dbReference type="PANTHER" id="PTHR10151:SF107">
    <property type="entry name" value="ECTONUCLEOTIDE PYROPHOSPHATASE_PHOSPHODIESTERASE FAMILY MEMBER 3"/>
    <property type="match status" value="1"/>
</dbReference>
<dbReference type="Pfam" id="PF01663">
    <property type="entry name" value="Phosphodiest"/>
    <property type="match status" value="1"/>
</dbReference>
<dbReference type="Pfam" id="PF01033">
    <property type="entry name" value="Somatomedin_B"/>
    <property type="match status" value="2"/>
</dbReference>
<dbReference type="SMART" id="SM00892">
    <property type="entry name" value="Endonuclease_NS"/>
    <property type="match status" value="1"/>
</dbReference>
<dbReference type="SMART" id="SM00477">
    <property type="entry name" value="NUC"/>
    <property type="match status" value="1"/>
</dbReference>
<dbReference type="SMART" id="SM00201">
    <property type="entry name" value="SO"/>
    <property type="match status" value="2"/>
</dbReference>
<dbReference type="SUPFAM" id="SSF53649">
    <property type="entry name" value="Alkaline phosphatase-like"/>
    <property type="match status" value="1"/>
</dbReference>
<dbReference type="SUPFAM" id="SSF54060">
    <property type="entry name" value="His-Me finger endonucleases"/>
    <property type="match status" value="1"/>
</dbReference>
<dbReference type="SUPFAM" id="SSF90188">
    <property type="entry name" value="Somatomedin B domain"/>
    <property type="match status" value="2"/>
</dbReference>
<dbReference type="PROSITE" id="PS00524">
    <property type="entry name" value="SMB_1"/>
    <property type="match status" value="2"/>
</dbReference>
<dbReference type="PROSITE" id="PS50958">
    <property type="entry name" value="SMB_2"/>
    <property type="match status" value="2"/>
</dbReference>
<protein>
    <recommendedName>
        <fullName evidence="1">Ectonucleotide pyrophosphatase/phosphodiesterase family member 3</fullName>
        <shortName>E-NPP 3</shortName>
    </recommendedName>
    <alternativeName>
        <fullName evidence="1">Alkaline phosphodiesterase I</fullName>
        <ecNumber evidence="1">3.1.4.1</ecNumber>
    </alternativeName>
    <alternativeName>
        <fullName evidence="1">Dinucleoside polyphosphatase</fullName>
        <ecNumber evidence="1">3.6.1.-</ecNumber>
    </alternativeName>
    <alternativeName>
        <fullName evidence="7">Nucleotide diphosphatase</fullName>
    </alternativeName>
    <alternativeName>
        <fullName evidence="1">Nucleotide pyrophosphatase</fullName>
        <shortName>NPPase</shortName>
        <ecNumber evidence="1">3.6.1.9</ecNumber>
    </alternativeName>
    <alternativeName>
        <fullName>Phosphodiesterase I beta</fullName>
        <shortName>PD-Ibeta</shortName>
    </alternativeName>
    <alternativeName>
        <fullName>Phosphodiesterase I/nucleotide pyrophosphatase 3</fullName>
    </alternativeName>
    <cdAntigenName>CD203c</cdAntigenName>
</protein>
<comment type="function">
    <text evidence="1 3">Hydrolase that metabolizes extracellular nucleotides, including ATP, GTP, UTP and CTP (By similarity). Limits mast cells and basophils response during inflammation and during the chronic phases of allergic responses by eliminating extracellular ATP, a signaling molecule activating these cells in an autocrine manner. Metabolizes extracellular ATP in the lumen of the small intestine, and thereby prevents ATP-induced apoptosis of intestinal plasmacytoid dendritic cells (By similarity). Has a broad specificity and can also hydrolyze UDP-GlcNAc into UMP and GlcNAc-1-phosphate and potentially several other intracellular nucleotide sugars, including UDP-GalNAc, CMP-NeuAc, GDP-Fuc, and UDP-GlcA. Thereby, could modulate glycan biosynthesis and protein glycosylation (By similarity). Can hydrolyze extracellular dinucleoside polyphosphates, including the vasoactive adenosine polyphosphates as well. In addition, displays an alkaline phosphodiesterase activity in vitro (By similarity).</text>
</comment>
<comment type="catalytic activity">
    <reaction evidence="1">
        <text>a ribonucleoside 5'-triphosphate + H2O = a ribonucleoside 5'-phosphate + diphosphate + H(+)</text>
        <dbReference type="Rhea" id="RHEA:23996"/>
        <dbReference type="ChEBI" id="CHEBI:15377"/>
        <dbReference type="ChEBI" id="CHEBI:15378"/>
        <dbReference type="ChEBI" id="CHEBI:33019"/>
        <dbReference type="ChEBI" id="CHEBI:58043"/>
        <dbReference type="ChEBI" id="CHEBI:61557"/>
        <dbReference type="EC" id="3.6.1.9"/>
    </reaction>
    <physiologicalReaction direction="left-to-right" evidence="1">
        <dbReference type="Rhea" id="RHEA:23997"/>
    </physiologicalReaction>
</comment>
<comment type="catalytic activity">
    <reaction evidence="1">
        <text>ATP + H2O = AMP + diphosphate + H(+)</text>
        <dbReference type="Rhea" id="RHEA:14245"/>
        <dbReference type="ChEBI" id="CHEBI:15377"/>
        <dbReference type="ChEBI" id="CHEBI:15378"/>
        <dbReference type="ChEBI" id="CHEBI:30616"/>
        <dbReference type="ChEBI" id="CHEBI:33019"/>
        <dbReference type="ChEBI" id="CHEBI:456215"/>
        <dbReference type="EC" id="3.6.1.9"/>
    </reaction>
    <physiologicalReaction direction="left-to-right" evidence="1">
        <dbReference type="Rhea" id="RHEA:14246"/>
    </physiologicalReaction>
</comment>
<comment type="catalytic activity">
    <reaction evidence="1">
        <text>CTP + H2O = CMP + diphosphate + H(+)</text>
        <dbReference type="Rhea" id="RHEA:27762"/>
        <dbReference type="ChEBI" id="CHEBI:15377"/>
        <dbReference type="ChEBI" id="CHEBI:15378"/>
        <dbReference type="ChEBI" id="CHEBI:33019"/>
        <dbReference type="ChEBI" id="CHEBI:37563"/>
        <dbReference type="ChEBI" id="CHEBI:60377"/>
        <dbReference type="EC" id="3.6.1.9"/>
    </reaction>
    <physiologicalReaction direction="left-to-right" evidence="1">
        <dbReference type="Rhea" id="RHEA:27763"/>
    </physiologicalReaction>
</comment>
<comment type="catalytic activity">
    <reaction evidence="1">
        <text>GTP + H2O = GMP + diphosphate + H(+)</text>
        <dbReference type="Rhea" id="RHEA:29391"/>
        <dbReference type="ChEBI" id="CHEBI:15377"/>
        <dbReference type="ChEBI" id="CHEBI:15378"/>
        <dbReference type="ChEBI" id="CHEBI:33019"/>
        <dbReference type="ChEBI" id="CHEBI:37565"/>
        <dbReference type="ChEBI" id="CHEBI:58115"/>
        <dbReference type="EC" id="3.6.1.9"/>
    </reaction>
    <physiologicalReaction direction="left-to-right" evidence="1">
        <dbReference type="Rhea" id="RHEA:29392"/>
    </physiologicalReaction>
</comment>
<comment type="catalytic activity">
    <reaction evidence="1">
        <text>UTP + H2O = UMP + diphosphate + H(+)</text>
        <dbReference type="Rhea" id="RHEA:29395"/>
        <dbReference type="ChEBI" id="CHEBI:15377"/>
        <dbReference type="ChEBI" id="CHEBI:15378"/>
        <dbReference type="ChEBI" id="CHEBI:33019"/>
        <dbReference type="ChEBI" id="CHEBI:46398"/>
        <dbReference type="ChEBI" id="CHEBI:57865"/>
        <dbReference type="EC" id="3.6.1.9"/>
    </reaction>
    <physiologicalReaction direction="left-to-right" evidence="1">
        <dbReference type="Rhea" id="RHEA:29396"/>
    </physiologicalReaction>
</comment>
<comment type="catalytic activity">
    <reaction evidence="3">
        <text>UDP-N-acetyl-alpha-D-glucosamine + H2O = N-acetyl-alpha-D-glucosamine 1-phosphate + UMP + 2 H(+)</text>
        <dbReference type="Rhea" id="RHEA:29547"/>
        <dbReference type="ChEBI" id="CHEBI:15377"/>
        <dbReference type="ChEBI" id="CHEBI:15378"/>
        <dbReference type="ChEBI" id="CHEBI:57705"/>
        <dbReference type="ChEBI" id="CHEBI:57776"/>
        <dbReference type="ChEBI" id="CHEBI:57865"/>
    </reaction>
    <physiologicalReaction direction="left-to-right" evidence="3">
        <dbReference type="Rhea" id="RHEA:29548"/>
    </physiologicalReaction>
</comment>
<comment type="catalytic activity">
    <reaction evidence="1">
        <text>P(1),P(3)-bis(5'-adenosyl) triphosphate + H2O = AMP + ADP + 2 H(+)</text>
        <dbReference type="Rhea" id="RHEA:13893"/>
        <dbReference type="ChEBI" id="CHEBI:15377"/>
        <dbReference type="ChEBI" id="CHEBI:15378"/>
        <dbReference type="ChEBI" id="CHEBI:58529"/>
        <dbReference type="ChEBI" id="CHEBI:456215"/>
        <dbReference type="ChEBI" id="CHEBI:456216"/>
    </reaction>
    <physiologicalReaction direction="left-to-right" evidence="1">
        <dbReference type="Rhea" id="RHEA:13894"/>
    </physiologicalReaction>
</comment>
<comment type="catalytic activity">
    <reaction evidence="1">
        <text>P(1),P(4)-bis(5'-adenosyl) tetraphosphate + H2O = AMP + ATP + 2 H(+)</text>
        <dbReference type="Rhea" id="RHEA:32039"/>
        <dbReference type="ChEBI" id="CHEBI:15377"/>
        <dbReference type="ChEBI" id="CHEBI:15378"/>
        <dbReference type="ChEBI" id="CHEBI:30616"/>
        <dbReference type="ChEBI" id="CHEBI:58141"/>
        <dbReference type="ChEBI" id="CHEBI:456215"/>
    </reaction>
    <physiologicalReaction direction="left-to-right" evidence="1">
        <dbReference type="Rhea" id="RHEA:32040"/>
    </physiologicalReaction>
</comment>
<comment type="catalytic activity">
    <reaction evidence="1">
        <text>P(1),P(5)-bis(5'-adenosyl) pentaphosphate + H2O = adenosine 5'-tetraphosphate + AMP + 2 H(+)</text>
        <dbReference type="Rhea" id="RHEA:32051"/>
        <dbReference type="ChEBI" id="CHEBI:15377"/>
        <dbReference type="ChEBI" id="CHEBI:15378"/>
        <dbReference type="ChEBI" id="CHEBI:58450"/>
        <dbReference type="ChEBI" id="CHEBI:62041"/>
        <dbReference type="ChEBI" id="CHEBI:456215"/>
    </reaction>
    <physiologicalReaction direction="left-to-right" evidence="1">
        <dbReference type="Rhea" id="RHEA:32052"/>
    </physiologicalReaction>
</comment>
<comment type="catalytic activity">
    <reaction evidence="1">
        <text>P(1),P(4)-bis(5'-guanosyl) tetraphosphate + H2O = GMP + GTP + 2 H(+)</text>
        <dbReference type="Rhea" id="RHEA:22484"/>
        <dbReference type="ChEBI" id="CHEBI:15377"/>
        <dbReference type="ChEBI" id="CHEBI:15378"/>
        <dbReference type="ChEBI" id="CHEBI:37565"/>
        <dbReference type="ChEBI" id="CHEBI:57553"/>
        <dbReference type="ChEBI" id="CHEBI:58115"/>
    </reaction>
</comment>
<comment type="catalytic activity">
    <reaction evidence="1">
        <text>Hydrolytically removes 5'-nucleotides successively from the 3'-hydroxy termini of 3'-hydroxy-terminated oligonucleotides.</text>
        <dbReference type="EC" id="3.1.4.1"/>
    </reaction>
</comment>
<comment type="cofactor">
    <cofactor evidence="1">
        <name>Zn(2+)</name>
        <dbReference type="ChEBI" id="CHEBI:29105"/>
    </cofactor>
    <text evidence="1">Binds 2 zinc ions per subunit.</text>
</comment>
<comment type="subunit">
    <text evidence="1">Monomer and homodimer.</text>
</comment>
<comment type="subcellular location">
    <subcellularLocation>
        <location evidence="1">Cell membrane</location>
        <topology evidence="1">Single-pass type II membrane protein</topology>
    </subcellularLocation>
    <subcellularLocation>
        <location evidence="1">Apical cell membrane</location>
        <topology evidence="1">Single-pass type II membrane protein</topology>
    </subcellularLocation>
    <subcellularLocation>
        <location evidence="1">Secreted</location>
    </subcellularLocation>
    <text evidence="1">Detected at the cell surface of basophils. Detected at the apical plasma membrane of bile duct cells. Located to the apical surface in intestinal and kidney epithelial cells. Secreted in serum, and in lumen of epithelial cells.</text>
</comment>
<comment type="PTM">
    <text evidence="2">N-glycosylated. N-glycosylation is necessary for normal transport to the cell membrane, but is not the apical targeting signal.</text>
</comment>
<comment type="similarity">
    <text evidence="7">Belongs to the nucleotide pyrophosphatase/phosphodiesterase family.</text>
</comment>
<gene>
    <name type="primary">ENPP3</name>
</gene>
<accession>P15396</accession>
<accession>Q0II99</accession>
<evidence type="ECO:0000250" key="1">
    <source>
        <dbReference type="UniProtKB" id="O14638"/>
    </source>
</evidence>
<evidence type="ECO:0000250" key="2">
    <source>
        <dbReference type="UniProtKB" id="P97675"/>
    </source>
</evidence>
<evidence type="ECO:0000250" key="3">
    <source>
        <dbReference type="UniProtKB" id="Q6DYE8"/>
    </source>
</evidence>
<evidence type="ECO:0000255" key="4"/>
<evidence type="ECO:0000255" key="5">
    <source>
        <dbReference type="PROSITE-ProRule" id="PRU00350"/>
    </source>
</evidence>
<evidence type="ECO:0000269" key="6">
    <source>
    </source>
</evidence>
<evidence type="ECO:0000305" key="7"/>